<evidence type="ECO:0000255" key="1"/>
<evidence type="ECO:0000256" key="2">
    <source>
        <dbReference type="SAM" id="MobiDB-lite"/>
    </source>
</evidence>
<evidence type="ECO:0000269" key="3">
    <source>
    </source>
</evidence>
<evidence type="ECO:0000269" key="4">
    <source>
    </source>
</evidence>
<evidence type="ECO:0000269" key="5">
    <source>
    </source>
</evidence>
<evidence type="ECO:0000269" key="6">
    <source>
    </source>
</evidence>
<evidence type="ECO:0000269" key="7">
    <source>
    </source>
</evidence>
<evidence type="ECO:0000269" key="8">
    <source>
    </source>
</evidence>
<evidence type="ECO:0000269" key="9">
    <source>
    </source>
</evidence>
<evidence type="ECO:0000303" key="10">
    <source>
    </source>
</evidence>
<evidence type="ECO:0000303" key="11">
    <source>
    </source>
</evidence>
<evidence type="ECO:0000303" key="12">
    <source>
    </source>
</evidence>
<evidence type="ECO:0000303" key="13">
    <source>
    </source>
</evidence>
<evidence type="ECO:0000305" key="14"/>
<evidence type="ECO:0000305" key="15">
    <source>
    </source>
</evidence>
<evidence type="ECO:0000305" key="16">
    <source>
    </source>
</evidence>
<evidence type="ECO:0000312" key="17">
    <source>
        <dbReference type="Araport" id="AT1G05200"/>
    </source>
</evidence>
<evidence type="ECO:0000312" key="18">
    <source>
        <dbReference type="EMBL" id="AAB71458.1"/>
    </source>
</evidence>
<evidence type="ECO:0007829" key="19">
    <source>
        <dbReference type="PDB" id="7LZ2"/>
    </source>
</evidence>
<accession>Q8GXJ4</accession>
<accession>O23048</accession>
<accession>Q8LGM9</accession>
<accession>Q9SWD9</accession>
<organism>
    <name type="scientific">Arabidopsis thaliana</name>
    <name type="common">Mouse-ear cress</name>
    <dbReference type="NCBI Taxonomy" id="3702"/>
    <lineage>
        <taxon>Eukaryota</taxon>
        <taxon>Viridiplantae</taxon>
        <taxon>Streptophyta</taxon>
        <taxon>Embryophyta</taxon>
        <taxon>Tracheophyta</taxon>
        <taxon>Spermatophyta</taxon>
        <taxon>Magnoliopsida</taxon>
        <taxon>eudicotyledons</taxon>
        <taxon>Gunneridae</taxon>
        <taxon>Pentapetalae</taxon>
        <taxon>rosids</taxon>
        <taxon>malvids</taxon>
        <taxon>Brassicales</taxon>
        <taxon>Brassicaceae</taxon>
        <taxon>Camelineae</taxon>
        <taxon>Arabidopsis</taxon>
    </lineage>
</organism>
<comment type="function">
    <text evidence="4 5 7 8 9 15 16">Glutamate-gated receptor that probably acts as a non-selective cation channel, at least in hypocotyls (Probable). Can be triggered by Asn, Ser, Gly and, to a lower extent, Ala, Cys and Glu (PubMed:18162597, PubMed:22447719). May be involved in light-signal transduction and calcium homeostasis via the regulation of calcium influx into cells (Probable). Plays an important role in the calcium-based fast transmission of environmental stress (PubMed:15864638). Acts as a negative regulator of lateral root initiation and development (PubMed:23590882). May restrict primordia numbers and position along the root axis by a signaling process originating in the phloem (PubMed:23590882). AtGLR3.4-mediated cytosolic calcium influx may be involved in the regulation of seed germination under salt stress by modulating sodium accumulation through the SOS pathway (PubMed:29432559).</text>
</comment>
<comment type="subunit">
    <text evidence="8">Forms a heteromeric channel with GLR3.2.</text>
</comment>
<comment type="subcellular location">
    <subcellularLocation>
        <location evidence="4 6 7 8">Cell membrane</location>
        <topology evidence="1">Multi-pass membrane protein</topology>
    </subcellularLocation>
    <subcellularLocation>
        <location evidence="6">Plastid</location>
        <location evidence="6">Chloroplast membrane</location>
        <topology evidence="1">Multi-pass membrane protein</topology>
    </subcellularLocation>
    <text evidence="4 6 7 8">Localizes to the plasma membrane.</text>
</comment>
<comment type="alternative products">
    <event type="alternative splicing"/>
    <isoform>
        <id>Q8GXJ4-1</id>
        <name>1</name>
        <name>GLR3.4a</name>
        <sequence type="displayed"/>
    </isoform>
    <isoform>
        <id>Q8GXJ4-2</id>
        <name>2</name>
        <name>GLR3.4b</name>
        <sequence type="described" ref="VSP_009219 VSP_009220"/>
    </isoform>
</comment>
<comment type="tissue specificity">
    <text evidence="3 4 8">Highly expressed in roots and at lower levels in leaves and siliques (PubMed:12082126). Expressed in seedlings, cotyledons, roots (e.g. root hairs, epidermis and cortex cells), stems, leaves (e.g. vascular bundles and hydathodes), and siliques (PubMed:15864638). Expressed in root phloem (PubMed:23590882).</text>
</comment>
<comment type="induction">
    <text evidence="4">The induction by glutamate, gamma-amino butiric acid (GABA), malate, aspartate, acetate, wounding, touch, and cold stress stimuli is abscisic acid (ABA)-independent, but calcium-dependent. Cold-mediated induction is rapid but transient.</text>
</comment>
<comment type="disruption phenotype">
    <text evidence="5 6 8">Impaired glutamate-triggered (and Ala, Asn, Cys, Gly, Ser-triggered) membrane depolarization and calcium rise (PubMed:18162597). Slight reduction of photosynthetic yield of Photosystem II (PubMed:21110940). Overproduction and aberrant placement of lateral root primordia (PubMed:23590882).</text>
</comment>
<comment type="miscellaneous">
    <molecule>Isoform 2</molecule>
    <text evidence="14">May be due to an intron retention.</text>
</comment>
<comment type="similarity">
    <text evidence="14">Belongs to the glutamate-gated ion channel (TC 1.A.10.1) family.</text>
</comment>
<comment type="sequence caution" evidence="14">
    <conflict type="erroneous gene model prediction">
        <sequence resource="EMBL-CDS" id="AAB71458"/>
    </conflict>
</comment>
<comment type="sequence caution" evidence="14">
    <conflict type="erroneous termination">
        <sequence resource="EMBL-CDS" id="AAD47833"/>
    </conflict>
    <text>Truncated C-terminus.</text>
</comment>
<feature type="signal peptide" evidence="1">
    <location>
        <begin position="1"/>
        <end position="35"/>
    </location>
</feature>
<feature type="chain" id="PRO_0000011608" description="Glutamate receptor 3.4">
    <location>
        <begin position="36"/>
        <end position="959"/>
    </location>
</feature>
<feature type="topological domain" description="Extracellular" evidence="1">
    <location>
        <begin position="36"/>
        <end position="613"/>
    </location>
</feature>
<feature type="transmembrane region" description="Helical" evidence="1">
    <location>
        <begin position="614"/>
        <end position="634"/>
    </location>
</feature>
<feature type="topological domain" description="Cytoplasmic" evidence="1">
    <location>
        <begin position="635"/>
        <end position="643"/>
    </location>
</feature>
<feature type="transmembrane region" description="Helical" evidence="1">
    <location>
        <begin position="644"/>
        <end position="664"/>
    </location>
</feature>
<feature type="topological domain" description="Cytoplasmic" evidence="1">
    <location>
        <begin position="665"/>
        <end position="675"/>
    </location>
</feature>
<feature type="transmembrane region" description="Helical" evidence="1">
    <location>
        <begin position="676"/>
        <end position="696"/>
    </location>
</feature>
<feature type="topological domain" description="Extracellular" evidence="1">
    <location>
        <begin position="697"/>
        <end position="857"/>
    </location>
</feature>
<feature type="transmembrane region" description="Helical" evidence="1">
    <location>
        <begin position="858"/>
        <end position="878"/>
    </location>
</feature>
<feature type="topological domain" description="Cytoplasmic" evidence="1">
    <location>
        <begin position="879"/>
        <end position="959"/>
    </location>
</feature>
<feature type="region of interest" description="Disordered" evidence="2">
    <location>
        <begin position="893"/>
        <end position="913"/>
    </location>
</feature>
<feature type="region of interest" description="Disordered" evidence="2">
    <location>
        <begin position="936"/>
        <end position="959"/>
    </location>
</feature>
<feature type="compositionally biased region" description="Low complexity" evidence="2">
    <location>
        <begin position="943"/>
        <end position="959"/>
    </location>
</feature>
<feature type="glycosylation site" description="N-linked (GlcNAc...) asparagine" evidence="1">
    <location>
        <position position="38"/>
    </location>
</feature>
<feature type="glycosylation site" description="N-linked (GlcNAc...) asparagine" evidence="1">
    <location>
        <position position="42"/>
    </location>
</feature>
<feature type="glycosylation site" description="N-linked (GlcNAc...) asparagine" evidence="1">
    <location>
        <position position="108"/>
    </location>
</feature>
<feature type="glycosylation site" description="N-linked (GlcNAc...) asparagine" evidence="1">
    <location>
        <position position="365"/>
    </location>
</feature>
<feature type="glycosylation site" description="N-linked (GlcNAc...) asparagine" evidence="1">
    <location>
        <position position="378"/>
    </location>
</feature>
<feature type="glycosylation site" description="N-linked (GlcNAc...) asparagine" evidence="1">
    <location>
        <position position="404"/>
    </location>
</feature>
<feature type="glycosylation site" description="N-linked (GlcNAc...) asparagine" evidence="1">
    <location>
        <position position="443"/>
    </location>
</feature>
<feature type="glycosylation site" description="N-linked (GlcNAc...) asparagine" evidence="1">
    <location>
        <position position="461"/>
    </location>
</feature>
<feature type="glycosylation site" description="N-linked (GlcNAc...) asparagine" evidence="1">
    <location>
        <position position="576"/>
    </location>
</feature>
<feature type="splice variant" id="VSP_009219" description="In isoform 2." evidence="11">
    <original>FSFSTMFFSHRENT</original>
    <variation>LVSQFLTLEPEFTF</variation>
    <location>
        <begin position="656"/>
        <end position="669"/>
    </location>
</feature>
<feature type="splice variant" id="VSP_009220" description="In isoform 2." evidence="11">
    <location>
        <begin position="670"/>
        <end position="959"/>
    </location>
</feature>
<feature type="sequence conflict" description="In Ref. 5; AAD47833." evidence="14" ref="5">
    <original>R</original>
    <variation>G</variation>
    <location>
        <position position="57"/>
    </location>
</feature>
<feature type="sequence conflict" description="In Ref. 5; AAD47833." evidence="14" ref="5">
    <original>L</original>
    <variation>P</variation>
    <location>
        <position position="152"/>
    </location>
</feature>
<feature type="sequence conflict" description="In Ref. 5; AAD47833." evidence="14" ref="5">
    <original>H</original>
    <variation>Q</variation>
    <location>
        <position position="444"/>
    </location>
</feature>
<feature type="sequence conflict" description="In Ref. 4; BAC42828." evidence="14" ref="4">
    <original>V</original>
    <variation>A</variation>
    <location>
        <position position="450"/>
    </location>
</feature>
<feature type="sequence conflict" description="In Ref. 5; AAD47833." evidence="14" ref="5">
    <original>Y</original>
    <variation>N</variation>
    <location>
        <position position="733"/>
    </location>
</feature>
<feature type="sequence conflict" description="In Ref. 5; AAD47833." evidence="14" ref="5">
    <original>A</original>
    <variation>P</variation>
    <location>
        <position position="897"/>
    </location>
</feature>
<feature type="strand" evidence="19">
    <location>
        <begin position="494"/>
        <end position="499"/>
    </location>
</feature>
<feature type="strand" evidence="19">
    <location>
        <begin position="502"/>
        <end position="504"/>
    </location>
</feature>
<feature type="turn" evidence="19">
    <location>
        <begin position="505"/>
        <end position="507"/>
    </location>
</feature>
<feature type="strand" evidence="19">
    <location>
        <begin position="508"/>
        <end position="510"/>
    </location>
</feature>
<feature type="strand" evidence="19">
    <location>
        <begin position="516"/>
        <end position="519"/>
    </location>
</feature>
<feature type="helix" evidence="19">
    <location>
        <begin position="520"/>
        <end position="530"/>
    </location>
</feature>
<feature type="strand" evidence="19">
    <location>
        <begin position="532"/>
        <end position="534"/>
    </location>
</feature>
<feature type="strand" evidence="19">
    <location>
        <begin position="538"/>
        <end position="544"/>
    </location>
</feature>
<feature type="strand" evidence="19">
    <location>
        <begin position="546"/>
        <end position="548"/>
    </location>
</feature>
<feature type="helix" evidence="19">
    <location>
        <begin position="552"/>
        <end position="560"/>
    </location>
</feature>
<feature type="strand" evidence="19">
    <location>
        <begin position="565"/>
        <end position="567"/>
    </location>
</feature>
<feature type="helix" evidence="19">
    <location>
        <begin position="575"/>
        <end position="578"/>
    </location>
</feature>
<feature type="strand" evidence="19">
    <location>
        <begin position="581"/>
        <end position="583"/>
    </location>
</feature>
<feature type="strand" evidence="19">
    <location>
        <begin position="587"/>
        <end position="590"/>
    </location>
</feature>
<feature type="strand" evidence="19">
    <location>
        <begin position="592"/>
        <end position="597"/>
    </location>
</feature>
<feature type="helix" evidence="19">
    <location>
        <begin position="598"/>
        <end position="600"/>
    </location>
</feature>
<feature type="helix" evidence="19">
    <location>
        <begin position="712"/>
        <end position="717"/>
    </location>
</feature>
<feature type="strand" evidence="19">
    <location>
        <begin position="722"/>
        <end position="725"/>
    </location>
</feature>
<feature type="helix" evidence="19">
    <location>
        <begin position="730"/>
        <end position="738"/>
    </location>
</feature>
<feature type="helix" evidence="19">
    <location>
        <begin position="742"/>
        <end position="744"/>
    </location>
</feature>
<feature type="strand" evidence="19">
    <location>
        <begin position="745"/>
        <end position="748"/>
    </location>
</feature>
<feature type="helix" evidence="19">
    <location>
        <begin position="751"/>
        <end position="760"/>
    </location>
</feature>
<feature type="turn" evidence="19">
    <location>
        <begin position="762"/>
        <end position="765"/>
    </location>
</feature>
<feature type="strand" evidence="19">
    <location>
        <begin position="768"/>
        <end position="773"/>
    </location>
</feature>
<feature type="helix" evidence="19">
    <location>
        <begin position="774"/>
        <end position="782"/>
    </location>
</feature>
<feature type="turn" evidence="19">
    <location>
        <begin position="783"/>
        <end position="786"/>
    </location>
</feature>
<feature type="strand" evidence="19">
    <location>
        <begin position="787"/>
        <end position="792"/>
    </location>
</feature>
<feature type="strand" evidence="19">
    <location>
        <begin position="798"/>
        <end position="800"/>
    </location>
</feature>
<feature type="strand" evidence="19">
    <location>
        <begin position="803"/>
        <end position="805"/>
    </location>
</feature>
<feature type="helix" evidence="19">
    <location>
        <begin position="809"/>
        <end position="823"/>
    </location>
</feature>
<feature type="helix" evidence="19">
    <location>
        <begin position="826"/>
        <end position="834"/>
    </location>
</feature>
<gene>
    <name evidence="10" type="primary">GLR3.4</name>
    <name evidence="14" type="synonym">GLR4</name>
    <name evidence="13" type="synonym">GLUR3</name>
    <name evidence="17" type="ordered locus">At1g05200</name>
    <name evidence="18" type="ORF">YUP8H12.19</name>
</gene>
<proteinExistence type="evidence at protein level"/>
<protein>
    <recommendedName>
        <fullName evidence="10">Glutamate receptor 3.4</fullName>
        <shortName evidence="10">AtGLR3.4</shortName>
    </recommendedName>
    <alternativeName>
        <fullName evidence="12">Glutamate receptor-like protein 3.4</fullName>
    </alternativeName>
    <alternativeName>
        <fullName evidence="14">Ligand-gated ion channel 3.4</fullName>
    </alternativeName>
</protein>
<keyword id="KW-0002">3D-structure</keyword>
<keyword id="KW-0025">Alternative splicing</keyword>
<keyword id="KW-1003">Cell membrane</keyword>
<keyword id="KW-0150">Chloroplast</keyword>
<keyword id="KW-0325">Glycoprotein</keyword>
<keyword id="KW-0407">Ion channel</keyword>
<keyword id="KW-0406">Ion transport</keyword>
<keyword id="KW-1071">Ligand-gated ion channel</keyword>
<keyword id="KW-0472">Membrane</keyword>
<keyword id="KW-0934">Plastid</keyword>
<keyword id="KW-0675">Receptor</keyword>
<keyword id="KW-1185">Reference proteome</keyword>
<keyword id="KW-0732">Signal</keyword>
<keyword id="KW-0346">Stress response</keyword>
<keyword id="KW-0812">Transmembrane</keyword>
<keyword id="KW-1133">Transmembrane helix</keyword>
<keyword id="KW-0813">Transport</keyword>
<reference key="1">
    <citation type="journal article" date="2002" name="Mol. Biol. Evol.">
        <title>Phylogenetic and expression analysis of the glutamate-receptor-like gene family in Arabidopsis thaliana.</title>
        <authorList>
            <person name="Chiu J.C."/>
            <person name="Brenner E.D."/>
            <person name="DeSalle R."/>
            <person name="Nitabach M.N."/>
            <person name="Holmes T.C."/>
            <person name="Coruzzi G.M."/>
        </authorList>
    </citation>
    <scope>NUCLEOTIDE SEQUENCE [MRNA] (ISOFORM 1)</scope>
    <scope>TISSUE SPECIFICITY</scope>
    <source>
        <strain>cv. Columbia</strain>
    </source>
</reference>
<reference key="2">
    <citation type="journal article" date="2000" name="Nature">
        <title>Sequence and analysis of chromosome 1 of the plant Arabidopsis thaliana.</title>
        <authorList>
            <person name="Theologis A."/>
            <person name="Ecker J.R."/>
            <person name="Palm C.J."/>
            <person name="Federspiel N.A."/>
            <person name="Kaul S."/>
            <person name="White O."/>
            <person name="Alonso J."/>
            <person name="Altafi H."/>
            <person name="Araujo R."/>
            <person name="Bowman C.L."/>
            <person name="Brooks S.Y."/>
            <person name="Buehler E."/>
            <person name="Chan A."/>
            <person name="Chao Q."/>
            <person name="Chen H."/>
            <person name="Cheuk R.F."/>
            <person name="Chin C.W."/>
            <person name="Chung M.K."/>
            <person name="Conn L."/>
            <person name="Conway A.B."/>
            <person name="Conway A.R."/>
            <person name="Creasy T.H."/>
            <person name="Dewar K."/>
            <person name="Dunn P."/>
            <person name="Etgu P."/>
            <person name="Feldblyum T.V."/>
            <person name="Feng J.-D."/>
            <person name="Fong B."/>
            <person name="Fujii C.Y."/>
            <person name="Gill J.E."/>
            <person name="Goldsmith A.D."/>
            <person name="Haas B."/>
            <person name="Hansen N.F."/>
            <person name="Hughes B."/>
            <person name="Huizar L."/>
            <person name="Hunter J.L."/>
            <person name="Jenkins J."/>
            <person name="Johnson-Hopson C."/>
            <person name="Khan S."/>
            <person name="Khaykin E."/>
            <person name="Kim C.J."/>
            <person name="Koo H.L."/>
            <person name="Kremenetskaia I."/>
            <person name="Kurtz D.B."/>
            <person name="Kwan A."/>
            <person name="Lam B."/>
            <person name="Langin-Hooper S."/>
            <person name="Lee A."/>
            <person name="Lee J.M."/>
            <person name="Lenz C.A."/>
            <person name="Li J.H."/>
            <person name="Li Y.-P."/>
            <person name="Lin X."/>
            <person name="Liu S.X."/>
            <person name="Liu Z.A."/>
            <person name="Luros J.S."/>
            <person name="Maiti R."/>
            <person name="Marziali A."/>
            <person name="Militscher J."/>
            <person name="Miranda M."/>
            <person name="Nguyen M."/>
            <person name="Nierman W.C."/>
            <person name="Osborne B.I."/>
            <person name="Pai G."/>
            <person name="Peterson J."/>
            <person name="Pham P.K."/>
            <person name="Rizzo M."/>
            <person name="Rooney T."/>
            <person name="Rowley D."/>
            <person name="Sakano H."/>
            <person name="Salzberg S.L."/>
            <person name="Schwartz J.R."/>
            <person name="Shinn P."/>
            <person name="Southwick A.M."/>
            <person name="Sun H."/>
            <person name="Tallon L.J."/>
            <person name="Tambunga G."/>
            <person name="Toriumi M.J."/>
            <person name="Town C.D."/>
            <person name="Utterback T."/>
            <person name="Van Aken S."/>
            <person name="Vaysberg M."/>
            <person name="Vysotskaia V.S."/>
            <person name="Walker M."/>
            <person name="Wu D."/>
            <person name="Yu G."/>
            <person name="Fraser C.M."/>
            <person name="Venter J.C."/>
            <person name="Davis R.W."/>
        </authorList>
    </citation>
    <scope>NUCLEOTIDE SEQUENCE [LARGE SCALE GENOMIC DNA]</scope>
    <source>
        <strain>cv. Columbia</strain>
    </source>
</reference>
<reference key="3">
    <citation type="journal article" date="2017" name="Plant J.">
        <title>Araport11: a complete reannotation of the Arabidopsis thaliana reference genome.</title>
        <authorList>
            <person name="Cheng C.Y."/>
            <person name="Krishnakumar V."/>
            <person name="Chan A.P."/>
            <person name="Thibaud-Nissen F."/>
            <person name="Schobel S."/>
            <person name="Town C.D."/>
        </authorList>
    </citation>
    <scope>GENOME REANNOTATION</scope>
    <source>
        <strain>cv. Columbia</strain>
    </source>
</reference>
<reference key="4">
    <citation type="journal article" date="2002" name="Science">
        <title>Functional annotation of a full-length Arabidopsis cDNA collection.</title>
        <authorList>
            <person name="Seki M."/>
            <person name="Narusaka M."/>
            <person name="Kamiya A."/>
            <person name="Ishida J."/>
            <person name="Satou M."/>
            <person name="Sakurai T."/>
            <person name="Nakajima M."/>
            <person name="Enju A."/>
            <person name="Akiyama K."/>
            <person name="Oono Y."/>
            <person name="Muramatsu M."/>
            <person name="Hayashizaki Y."/>
            <person name="Kawai J."/>
            <person name="Carninci P."/>
            <person name="Itoh M."/>
            <person name="Ishii Y."/>
            <person name="Arakawa T."/>
            <person name="Shibata K."/>
            <person name="Shinagawa A."/>
            <person name="Shinozaki K."/>
        </authorList>
    </citation>
    <scope>NUCLEOTIDE SEQUENCE [LARGE SCALE MRNA] (ISOFORM 2)</scope>
    <source>
        <strain>cv. Columbia</strain>
    </source>
</reference>
<reference key="5">
    <citation type="journal article" date="2005" name="Planta">
        <title>AtGLR3.4, a glutamate receptor channel-like gene is sensitive to touch and cold.</title>
        <authorList>
            <person name="Meyerhoff O."/>
            <person name="Mueller K."/>
            <person name="Roelfsema M.R.G."/>
            <person name="Latz A."/>
            <person name="Lacombe B."/>
            <person name="Hedrich R."/>
            <person name="Dietrich P."/>
            <person name="Becker D."/>
        </authorList>
    </citation>
    <scope>NUCLEOTIDE SEQUENCE [MRNA] OF 12-959 (ISOFORM 1)</scope>
    <scope>FUNCTION</scope>
    <scope>TISSUE SPECIFICITY</scope>
    <scope>INDUCTION BY ABIOTIC STRESSES</scope>
    <scope>SUBCELLULAR LOCATION</scope>
    <source>
        <strain>cv. Columbia</strain>
    </source>
</reference>
<reference key="6">
    <citation type="journal article" date="2001" name="Science">
        <title>The identity of plant glutamate receptors.</title>
        <authorList>
            <person name="Lacombe B."/>
            <person name="Becker D."/>
            <person name="Hedrich R."/>
            <person name="DeSalle R."/>
            <person name="Hollmann M."/>
            <person name="Kwak J.M."/>
            <person name="Schroeder J.I."/>
            <person name="Le Novere N."/>
            <person name="Nam H.G."/>
            <person name="Spalding E.P."/>
            <person name="Tester M."/>
            <person name="Turano F.J."/>
            <person name="Chiu J."/>
            <person name="Coruzzi G."/>
        </authorList>
    </citation>
    <scope>GENE FAMILY</scope>
    <scope>NOMENCLATURE</scope>
</reference>
<reference key="7">
    <citation type="journal article" date="2008" name="Plant Physiol.">
        <title>Glutamate receptor subtypes evidenced by differences in desensitization and dependence on the GLR3.3 and GLR3.4 genes.</title>
        <authorList>
            <person name="Stephens N.R."/>
            <person name="Qi Z."/>
            <person name="Spalding E.P."/>
        </authorList>
    </citation>
    <scope>FUNCTION</scope>
    <scope>DISRUPTION PHENOTYPE</scope>
</reference>
<reference key="8">
    <citation type="journal article" date="2011" name="Biochim. Biophys. Acta">
        <title>Dual localization of plant glutamate receptor AtGLR3.4 to plastids and plasmamembrane.</title>
        <authorList>
            <person name="Teardo E."/>
            <person name="Formentin E."/>
            <person name="Segalla A."/>
            <person name="Giacometti G.M."/>
            <person name="Marin O."/>
            <person name="Zanetti M."/>
            <person name="Lo Schiavo F."/>
            <person name="Zoratti M."/>
            <person name="Szabo I."/>
        </authorList>
    </citation>
    <scope>FUNCTION</scope>
    <scope>SUBCELLULAR LOCATION</scope>
    <scope>DISRUPTION PHENOTYPE</scope>
</reference>
<reference key="9">
    <citation type="journal article" date="2012" name="Plant Physiol.">
        <title>Ca(2+) conduction by an amino acid-gated ion channel related to glutamate receptors.</title>
        <authorList>
            <person name="Vincill E.D."/>
            <person name="Bieck A.M."/>
            <person name="Spalding E.P."/>
        </authorList>
    </citation>
    <scope>FUNCTION</scope>
    <scope>SUBCELLULAR LOCATION</scope>
</reference>
<reference key="10">
    <citation type="journal article" date="2013" name="Plant Cell">
        <title>Interacting glutamate receptor-like proteins in phloem regulate lateral root initiation in Arabidopsis.</title>
        <authorList>
            <person name="Vincill E.D."/>
            <person name="Clarin A.E."/>
            <person name="Molenda J.N."/>
            <person name="Spalding E.P."/>
        </authorList>
    </citation>
    <scope>FUNCTION</scope>
    <scope>INTERACTION WITH GLR3.2</scope>
    <scope>SUBCELLULAR LOCATION</scope>
    <scope>TISSUE SPECIFICITY</scope>
    <scope>DISRUPTION PHENOTYPE</scope>
</reference>
<reference key="11">
    <citation type="journal article" date="2018" name="Plant Cell Physiol.">
        <title>Glutamate receptor homolog3.4 is involved in regulation of seed germination under salt stress in Arabidopsis.</title>
        <authorList>
            <person name="Cheng Y."/>
            <person name="Zhang X."/>
            <person name="Sun T."/>
            <person name="Tian Q."/>
            <person name="Zhang W.H."/>
        </authorList>
    </citation>
    <scope>FUNCTION</scope>
</reference>
<dbReference type="EMBL" id="AY072070">
    <property type="protein sequence ID" value="AAL61999.1"/>
    <property type="molecule type" value="mRNA"/>
</dbReference>
<dbReference type="EMBL" id="AC000098">
    <property type="protein sequence ID" value="AAB71458.1"/>
    <property type="status" value="ALT_SEQ"/>
    <property type="molecule type" value="Genomic_DNA"/>
</dbReference>
<dbReference type="EMBL" id="CP002684">
    <property type="protein sequence ID" value="AEE27803.1"/>
    <property type="molecule type" value="Genomic_DNA"/>
</dbReference>
<dbReference type="EMBL" id="CP002684">
    <property type="protein sequence ID" value="AEE27804.1"/>
    <property type="molecule type" value="Genomic_DNA"/>
</dbReference>
<dbReference type="EMBL" id="CP002684">
    <property type="protein sequence ID" value="ANM58387.1"/>
    <property type="molecule type" value="Genomic_DNA"/>
</dbReference>
<dbReference type="EMBL" id="CP002684">
    <property type="protein sequence ID" value="ANM58390.1"/>
    <property type="molecule type" value="Genomic_DNA"/>
</dbReference>
<dbReference type="EMBL" id="AK118206">
    <property type="protein sequence ID" value="BAC42828.1"/>
    <property type="molecule type" value="mRNA"/>
</dbReference>
<dbReference type="EMBL" id="AF167355">
    <property type="protein sequence ID" value="AAD47833.1"/>
    <property type="status" value="ALT_SEQ"/>
    <property type="molecule type" value="mRNA"/>
</dbReference>
<dbReference type="PIR" id="D86186">
    <property type="entry name" value="D86186"/>
</dbReference>
<dbReference type="PIR" id="T51135">
    <property type="entry name" value="T51135"/>
</dbReference>
<dbReference type="RefSeq" id="NP_001030971.1">
    <molecule id="Q8GXJ4-1"/>
    <property type="nucleotide sequence ID" value="NM_001035894.1"/>
</dbReference>
<dbReference type="RefSeq" id="NP_001320828.1">
    <molecule id="Q8GXJ4-2"/>
    <property type="nucleotide sequence ID" value="NM_001331525.1"/>
</dbReference>
<dbReference type="RefSeq" id="NP_001320831.1">
    <molecule id="Q8GXJ4-1"/>
    <property type="nucleotide sequence ID" value="NM_001331526.1"/>
</dbReference>
<dbReference type="RefSeq" id="NP_172012.2">
    <molecule id="Q8GXJ4-1"/>
    <property type="nucleotide sequence ID" value="NM_100398.3"/>
</dbReference>
<dbReference type="PDB" id="7LZ0">
    <property type="method" value="X-ray"/>
    <property type="resolution" value="2.29 A"/>
    <property type="chains" value="A/B/C=492-601, A/B/C=709-842"/>
</dbReference>
<dbReference type="PDB" id="7LZ1">
    <property type="method" value="X-ray"/>
    <property type="resolution" value="1.51 A"/>
    <property type="chains" value="A/B/C=492-601, A/B/C=709-842"/>
</dbReference>
<dbReference type="PDB" id="7LZ2">
    <property type="method" value="X-ray"/>
    <property type="resolution" value="1.50 A"/>
    <property type="chains" value="A/B/C=492-601, A/B/C=709-842"/>
</dbReference>
<dbReference type="PDB" id="7LZH">
    <property type="method" value="EM"/>
    <property type="resolution" value="3.57 A"/>
    <property type="chains" value="A/B/C/D=1-959"/>
</dbReference>
<dbReference type="PDB" id="7LZI">
    <property type="method" value="EM"/>
    <property type="resolution" value="4.39 A"/>
    <property type="chains" value="A/B/C/D=1-959"/>
</dbReference>
<dbReference type="PDBsum" id="7LZ0"/>
<dbReference type="PDBsum" id="7LZ1"/>
<dbReference type="PDBsum" id="7LZ2"/>
<dbReference type="PDBsum" id="7LZH"/>
<dbReference type="PDBsum" id="7LZI"/>
<dbReference type="EMDB" id="EMD-23606"/>
<dbReference type="EMDB" id="EMD-23607"/>
<dbReference type="SMR" id="Q8GXJ4"/>
<dbReference type="BioGRID" id="24503">
    <property type="interactions" value="22"/>
</dbReference>
<dbReference type="FunCoup" id="Q8GXJ4">
    <property type="interactions" value="324"/>
</dbReference>
<dbReference type="IntAct" id="Q8GXJ4">
    <property type="interactions" value="12"/>
</dbReference>
<dbReference type="STRING" id="3702.Q8GXJ4"/>
<dbReference type="TCDB" id="1.A.10.1.10">
    <property type="family name" value="the glutamate-gated ion channel (gic) family of neurotransmitter receptors"/>
</dbReference>
<dbReference type="GlyCosmos" id="Q8GXJ4">
    <property type="glycosylation" value="9 sites, No reported glycans"/>
</dbReference>
<dbReference type="GlyGen" id="Q8GXJ4">
    <property type="glycosylation" value="10 sites"/>
</dbReference>
<dbReference type="iPTMnet" id="Q8GXJ4"/>
<dbReference type="PaxDb" id="3702-AT1G05200.2"/>
<dbReference type="ProteomicsDB" id="248596">
    <molecule id="Q8GXJ4-1"/>
</dbReference>
<dbReference type="EnsemblPlants" id="AT1G05200.1">
    <molecule id="Q8GXJ4-1"/>
    <property type="protein sequence ID" value="AT1G05200.1"/>
    <property type="gene ID" value="AT1G05200"/>
</dbReference>
<dbReference type="EnsemblPlants" id="AT1G05200.2">
    <molecule id="Q8GXJ4-1"/>
    <property type="protein sequence ID" value="AT1G05200.2"/>
    <property type="gene ID" value="AT1G05200"/>
</dbReference>
<dbReference type="EnsemblPlants" id="AT1G05200.5">
    <molecule id="Q8GXJ4-2"/>
    <property type="protein sequence ID" value="AT1G05200.5"/>
    <property type="gene ID" value="AT1G05200"/>
</dbReference>
<dbReference type="EnsemblPlants" id="AT1G05200.6">
    <molecule id="Q8GXJ4-1"/>
    <property type="protein sequence ID" value="AT1G05200.6"/>
    <property type="gene ID" value="AT1G05200"/>
</dbReference>
<dbReference type="GeneID" id="839268"/>
<dbReference type="Gramene" id="AT1G05200.1">
    <molecule id="Q8GXJ4-1"/>
    <property type="protein sequence ID" value="AT1G05200.1"/>
    <property type="gene ID" value="AT1G05200"/>
</dbReference>
<dbReference type="Gramene" id="AT1G05200.2">
    <molecule id="Q8GXJ4-1"/>
    <property type="protein sequence ID" value="AT1G05200.2"/>
    <property type="gene ID" value="AT1G05200"/>
</dbReference>
<dbReference type="Gramene" id="AT1G05200.5">
    <molecule id="Q8GXJ4-2"/>
    <property type="protein sequence ID" value="AT1G05200.5"/>
    <property type="gene ID" value="AT1G05200"/>
</dbReference>
<dbReference type="Gramene" id="AT1G05200.6">
    <molecule id="Q8GXJ4-1"/>
    <property type="protein sequence ID" value="AT1G05200.6"/>
    <property type="gene ID" value="AT1G05200"/>
</dbReference>
<dbReference type="KEGG" id="ath:AT1G05200"/>
<dbReference type="Araport" id="AT1G05200"/>
<dbReference type="TAIR" id="AT1G05200">
    <property type="gene designation" value="GLR3.4"/>
</dbReference>
<dbReference type="eggNOG" id="KOG1052">
    <property type="taxonomic scope" value="Eukaryota"/>
</dbReference>
<dbReference type="HOGENOM" id="CLU_007358_0_1_1"/>
<dbReference type="InParanoid" id="Q8GXJ4"/>
<dbReference type="OMA" id="SMTCLGD"/>
<dbReference type="PhylomeDB" id="Q8GXJ4"/>
<dbReference type="PRO" id="PR:Q8GXJ4"/>
<dbReference type="Proteomes" id="UP000006548">
    <property type="component" value="Chromosome 1"/>
</dbReference>
<dbReference type="ExpressionAtlas" id="Q8GXJ4">
    <property type="expression patterns" value="baseline and differential"/>
</dbReference>
<dbReference type="GO" id="GO:0009507">
    <property type="term" value="C:chloroplast"/>
    <property type="evidence" value="ECO:0000314"/>
    <property type="project" value="UniProtKB"/>
</dbReference>
<dbReference type="GO" id="GO:0031969">
    <property type="term" value="C:chloroplast membrane"/>
    <property type="evidence" value="ECO:0007669"/>
    <property type="project" value="UniProtKB-SubCell"/>
</dbReference>
<dbReference type="GO" id="GO:0005886">
    <property type="term" value="C:plasma membrane"/>
    <property type="evidence" value="ECO:0000314"/>
    <property type="project" value="UniProtKB"/>
</dbReference>
<dbReference type="GO" id="GO:0009536">
    <property type="term" value="C:plastid"/>
    <property type="evidence" value="ECO:0000314"/>
    <property type="project" value="TAIR"/>
</dbReference>
<dbReference type="GO" id="GO:0005262">
    <property type="term" value="F:calcium channel activity"/>
    <property type="evidence" value="ECO:0000315"/>
    <property type="project" value="UniProtKB"/>
</dbReference>
<dbReference type="GO" id="GO:0008066">
    <property type="term" value="F:glutamate receptor activity"/>
    <property type="evidence" value="ECO:0000315"/>
    <property type="project" value="UniProtKB"/>
</dbReference>
<dbReference type="GO" id="GO:0015276">
    <property type="term" value="F:ligand-gated monoatomic ion channel activity"/>
    <property type="evidence" value="ECO:0000314"/>
    <property type="project" value="TAIR"/>
</dbReference>
<dbReference type="GO" id="GO:0006816">
    <property type="term" value="P:calcium ion transport"/>
    <property type="evidence" value="ECO:0000314"/>
    <property type="project" value="TAIR"/>
</dbReference>
<dbReference type="GO" id="GO:0019722">
    <property type="term" value="P:calcium-mediated signaling"/>
    <property type="evidence" value="ECO:0000314"/>
    <property type="project" value="UniProtKB"/>
</dbReference>
<dbReference type="GO" id="GO:0071311">
    <property type="term" value="P:cellular response to acetate"/>
    <property type="evidence" value="ECO:0000270"/>
    <property type="project" value="UniProtKB"/>
</dbReference>
<dbReference type="GO" id="GO:0071230">
    <property type="term" value="P:cellular response to amino acid stimulus"/>
    <property type="evidence" value="ECO:0000315"/>
    <property type="project" value="UniProtKB"/>
</dbReference>
<dbReference type="GO" id="GO:0070417">
    <property type="term" value="P:cellular response to cold"/>
    <property type="evidence" value="ECO:0000270"/>
    <property type="project" value="UniProtKB"/>
</dbReference>
<dbReference type="GO" id="GO:0071260">
    <property type="term" value="P:cellular response to mechanical stimulus"/>
    <property type="evidence" value="ECO:0000270"/>
    <property type="project" value="UniProtKB"/>
</dbReference>
<dbReference type="GO" id="GO:0009611">
    <property type="term" value="P:response to wounding"/>
    <property type="evidence" value="ECO:0000270"/>
    <property type="project" value="UniProtKB"/>
</dbReference>
<dbReference type="CDD" id="cd13686">
    <property type="entry name" value="GluR_Plant"/>
    <property type="match status" value="1"/>
</dbReference>
<dbReference type="CDD" id="cd19990">
    <property type="entry name" value="PBP1_GABAb_receptor_plant"/>
    <property type="match status" value="1"/>
</dbReference>
<dbReference type="FunFam" id="1.10.287.70:FF:000037">
    <property type="entry name" value="Glutamate receptor"/>
    <property type="match status" value="1"/>
</dbReference>
<dbReference type="FunFam" id="3.40.190.10:FF:000054">
    <property type="entry name" value="Glutamate receptor"/>
    <property type="match status" value="1"/>
</dbReference>
<dbReference type="FunFam" id="3.40.190.10:FF:000175">
    <property type="entry name" value="Glutamate receptor"/>
    <property type="match status" value="1"/>
</dbReference>
<dbReference type="FunFam" id="3.40.50.2300:FF:000081">
    <property type="entry name" value="Glutamate receptor"/>
    <property type="match status" value="1"/>
</dbReference>
<dbReference type="Gene3D" id="1.10.287.70">
    <property type="match status" value="1"/>
</dbReference>
<dbReference type="Gene3D" id="3.40.50.2300">
    <property type="match status" value="2"/>
</dbReference>
<dbReference type="Gene3D" id="3.40.190.10">
    <property type="entry name" value="Periplasmic binding protein-like II"/>
    <property type="match status" value="3"/>
</dbReference>
<dbReference type="InterPro" id="IPR001828">
    <property type="entry name" value="ANF_lig-bd_rcpt"/>
</dbReference>
<dbReference type="InterPro" id="IPR044440">
    <property type="entry name" value="GABAb_receptor_plant_PBP1"/>
</dbReference>
<dbReference type="InterPro" id="IPR019594">
    <property type="entry name" value="Glu/Gly-bd"/>
</dbReference>
<dbReference type="InterPro" id="IPR015683">
    <property type="entry name" value="Ionotropic_Glu_rcpt"/>
</dbReference>
<dbReference type="InterPro" id="IPR001320">
    <property type="entry name" value="Iontro_rcpt_C"/>
</dbReference>
<dbReference type="InterPro" id="IPR017103">
    <property type="entry name" value="Iontropic_Glu_rcpt_pln"/>
</dbReference>
<dbReference type="InterPro" id="IPR028082">
    <property type="entry name" value="Peripla_BP_I"/>
</dbReference>
<dbReference type="PANTHER" id="PTHR18966">
    <property type="entry name" value="IONOTROPIC GLUTAMATE RECEPTOR"/>
    <property type="match status" value="1"/>
</dbReference>
<dbReference type="Pfam" id="PF01094">
    <property type="entry name" value="ANF_receptor"/>
    <property type="match status" value="1"/>
</dbReference>
<dbReference type="Pfam" id="PF00060">
    <property type="entry name" value="Lig_chan"/>
    <property type="match status" value="1"/>
</dbReference>
<dbReference type="Pfam" id="PF10613">
    <property type="entry name" value="Lig_chan-Glu_bd"/>
    <property type="match status" value="1"/>
</dbReference>
<dbReference type="PIRSF" id="PIRSF037090">
    <property type="entry name" value="Iontro_Glu-like_rcpt_pln"/>
    <property type="match status" value="1"/>
</dbReference>
<dbReference type="PRINTS" id="PR01176">
    <property type="entry name" value="GABABRECEPTR"/>
</dbReference>
<dbReference type="SMART" id="SM00079">
    <property type="entry name" value="PBPe"/>
    <property type="match status" value="1"/>
</dbReference>
<dbReference type="SUPFAM" id="SSF53822">
    <property type="entry name" value="Periplasmic binding protein-like I"/>
    <property type="match status" value="1"/>
</dbReference>
<dbReference type="SUPFAM" id="SSF53850">
    <property type="entry name" value="Periplasmic binding protein-like II"/>
    <property type="match status" value="1"/>
</dbReference>
<name>GLR34_ARATH</name>
<sequence>MGFLVMIREVSMAKAIRVVLLCVSVLWVVPKECACRSNFSRNSSSSSSSSLRPLRQRPSSVNVGALFTYDSFIGRAAKPAVKAAMDDVNADQSVLKGIKLNIIFQDSNCSGFIGTMGALQLMENKVVAAIGPQSSGIAHMISYVANELHVPLLSFGATDPTLSSLQFPYFLRTTQNDYFQMHAIADFLSYSGWRQVIAIFVDDECGRNGISVLGDVLAKKRSRISYKAAITPGADSSSIRDLLVSVNLMESRVFVVHVNPDSGLNVFSVAKSLGMMASGYVWIATDWLPTAMDSMEHVDSDTMDLLQGVVAFRHYTIESSVKRQFMARWKNLRPNDGFNSYAMYAYDSVWLVARALDVFFRENNNITFSNDPNLHKTNGSTIQLSALSVFNEGEKFMKIILGMNHTGVTGPIQFDSDRNRVNPAYEVLNLEGTAPRTVGYWSNHSGLSVVHPETLYSRPPNTSTANQRLKGIIYPGEVTKPPRGWVFPNNGKPLRIGVPNRVSYTDYVSKDKNPPGVRGYCIDVFEAAIELLPYPVPRTYILYGDGKRNPSYDNLVNEVVADNFDVAVGDITIVTNRTRYVDFTQPFIESGLVVVAPVKEAKSSPWSFLKPFTIEMWAVTGGFFLFVGAMVWILEHRFNQEFRGPPRRQLITIFWFSFSTMFFSHRENTVSSLGRFVLIIWLFVVLIINSSYTASLTSILTIRQLTSRIEGIDSLVTSNEPIGVQDGTFARNYLINELNILPSRIVPLKDEEQYLSALQRGPNAGGVAAIVDELPYIEVLLTNSNCKFRTVGQEFTRTGWGFAFQRDSPLAVDMSTAILQLSEEGELEKIHRKWLNYKHECSMQISNSEDSQLSLKSFWGLFLICGITCFMALTVFFWRVFWQYQRLLPESADEERAGEVSEPSRSGRGSRAPSFKELIKVVDKREAEIKEILKQKSSKKLKSTQSAAGTSQSQHGEIT</sequence>